<keyword id="KW-0066">ATP synthesis</keyword>
<keyword id="KW-0138">CF(0)</keyword>
<keyword id="KW-0375">Hydrogen ion transport</keyword>
<keyword id="KW-0406">Ion transport</keyword>
<keyword id="KW-0472">Membrane</keyword>
<keyword id="KW-0496">Mitochondrion</keyword>
<keyword id="KW-1185">Reference proteome</keyword>
<keyword id="KW-0812">Transmembrane</keyword>
<keyword id="KW-1133">Transmembrane helix</keyword>
<keyword id="KW-0813">Transport</keyword>
<sequence length="53" mass="6365">MPQMAPISWLLLFIIFSITFILFCSINYYSYMPNSPKSNELKNINLNSMNWKW</sequence>
<comment type="function">
    <text evidence="1">Mitochondrial membrane ATP synthase (F(1)F(0) ATP synthase or Complex V) produces ATP from ADP in the presence of a proton gradient across the membrane which is generated by electron transport complexes of the respiratory chain. F-type ATPases consist of two structural domains, F(1) - containing the extramembraneous catalytic core and F(0) - containing the membrane proton channel, linked together by a central stalk and a peripheral stalk. During catalysis, ATP synthesis in the catalytic domain of F(1) is coupled via a rotary mechanism of the central stalk subunits to proton translocation. Part of the complex F(0) domain. Minor subunit located with subunit a in the membrane (By similarity).</text>
</comment>
<comment type="subunit">
    <text evidence="1">F-type ATPases have 2 components, CF(1) - the catalytic core - and CF(0) - the membrane proton channel.</text>
</comment>
<comment type="subcellular location">
    <subcellularLocation>
        <location>Mitochondrion membrane</location>
        <topology>Single-pass membrane protein</topology>
    </subcellularLocation>
</comment>
<comment type="similarity">
    <text evidence="3">Belongs to the ATPase protein 8 family.</text>
</comment>
<proteinExistence type="inferred from homology"/>
<gene>
    <name type="primary">mt:ATPase8</name>
    <name type="synonym">ATP8</name>
    <name type="synonym">ATPase8</name>
    <name type="synonym">Mtatp8</name>
</gene>
<protein>
    <recommendedName>
        <fullName>ATP synthase protein 8</fullName>
    </recommendedName>
    <alternativeName>
        <fullName>A6L</fullName>
    </alternativeName>
    <alternativeName>
        <fullName>F-ATPase subunit 8</fullName>
    </alternativeName>
</protein>
<organism>
    <name type="scientific">Drosophila melanogaster</name>
    <name type="common">Fruit fly</name>
    <dbReference type="NCBI Taxonomy" id="7227"/>
    <lineage>
        <taxon>Eukaryota</taxon>
        <taxon>Metazoa</taxon>
        <taxon>Ecdysozoa</taxon>
        <taxon>Arthropoda</taxon>
        <taxon>Hexapoda</taxon>
        <taxon>Insecta</taxon>
        <taxon>Pterygota</taxon>
        <taxon>Neoptera</taxon>
        <taxon>Endopterygota</taxon>
        <taxon>Diptera</taxon>
        <taxon>Brachycera</taxon>
        <taxon>Muscomorpha</taxon>
        <taxon>Ephydroidea</taxon>
        <taxon>Drosophilidae</taxon>
        <taxon>Drosophila</taxon>
        <taxon>Sophophora</taxon>
    </lineage>
</organism>
<evidence type="ECO:0000250" key="1"/>
<evidence type="ECO:0000255" key="2"/>
<evidence type="ECO:0000305" key="3"/>
<geneLocation type="mitochondrion"/>
<name>ATP8_DROME</name>
<reference key="1">
    <citation type="journal article" date="1983" name="Nature">
        <title>Drosophila melanogaster mitochondrial DNA, a novel organization and genetic code.</title>
        <authorList>
            <person name="de Bruijn M.H.L."/>
        </authorList>
    </citation>
    <scope>NUCLEOTIDE SEQUENCE [GENOMIC DNA]</scope>
</reference>
<reference key="2">
    <citation type="journal article" date="2000" name="J. Mol. Evol.">
        <title>Comparative genomics of mitochondrial DNA in members of the Drosophila melanogaster subgroup.</title>
        <authorList>
            <person name="Ballard J.W.O."/>
        </authorList>
    </citation>
    <scope>NUCLEOTIDE SEQUENCE [GENOMIC DNA]</scope>
    <source>
        <strain>Oregon-R</strain>
        <strain>Zimbabwe 53</strain>
    </source>
</reference>
<reference key="3">
    <citation type="journal article" date="2001" name="Heredity">
        <title>I-R system of hybrid dysgenesis in Drosophila melanogaster: analysis of the mitochondrial DNA in reactive strains exhibiting different potentials for I factor transposition.</title>
        <authorList>
            <person name="Azou Y."/>
            <person name="Bregliano J.C."/>
        </authorList>
    </citation>
    <scope>NUCLEOTIDE SEQUENCE [GENOMIC DNA]</scope>
    <source>
        <strain>Paris</strain>
    </source>
</reference>
<reference key="4">
    <citation type="journal article" date="2008" name="Aging Cell">
        <title>Variation in mitochondrial genotype has substantial lifespan effects which may be modulated by nuclear background.</title>
        <authorList>
            <person name="Clancy D.J."/>
        </authorList>
    </citation>
    <scope>NUCLEOTIDE SEQUENCE [GENOMIC DNA]</scope>
    <source>
        <strain>Alstonvl</strain>
        <strain>Brownsvl</strain>
        <strain>Dahomey</strain>
        <strain>Japan</strain>
        <strain>Mysore</strain>
        <strain>W1118iso</strain>
    </source>
</reference>
<reference key="5">
    <citation type="journal article" date="2008" name="Biol. Lett.">
        <title>Out of Hawaii: the origin and biogeography of the genus Scaptomyza (Diptera: Drosophilidae).</title>
        <authorList>
            <person name="O'Grady P.M."/>
            <person name="DeSalle R."/>
        </authorList>
    </citation>
    <scope>NUCLEOTIDE SEQUENCE [GENOMIC DNA]</scope>
</reference>
<reference key="6">
    <citation type="journal article" date="1995" name="Insect Mol. Biol.">
        <title>Drosophila melanogaster mitochondrial DNA: completion of the nucleotide sequence and evolutionary comparisons.</title>
        <authorList>
            <person name="Lewis D.L."/>
            <person name="Farr C.L."/>
            <person name="Kaguni L.S."/>
        </authorList>
    </citation>
    <scope>NUCLEOTIDE SEQUENCE [LARGE SCALE GENOMIC DNA]</scope>
</reference>
<reference key="7">
    <citation type="submission" date="2014-08" db="EMBL/GenBank/DDBJ databases">
        <authorList>
            <person name="Wan K."/>
            <person name="Celniker S."/>
        </authorList>
    </citation>
    <scope>NUCLEOTIDE SEQUENCE [LARGE SCALE GENOMIC DNA]</scope>
    <source>
        <strain>Berkeley</strain>
    </source>
</reference>
<feature type="chain" id="PRO_0000195523" description="ATP synthase protein 8">
    <location>
        <begin position="1"/>
        <end position="53"/>
    </location>
</feature>
<feature type="transmembrane region" description="Helical" evidence="2">
    <location>
        <begin position="4"/>
        <end position="24"/>
    </location>
</feature>
<accession>P84345</accession>
<accession>B2L9S1</accession>
<accession>B6E0P5</accession>
<accession>P03932</accession>
<dbReference type="EMBL" id="J01404">
    <property type="protein sequence ID" value="AAB59241.1"/>
    <property type="molecule type" value="Genomic_DNA"/>
</dbReference>
<dbReference type="EMBL" id="AF200828">
    <property type="protein sequence ID" value="AAF77229.1"/>
    <property type="molecule type" value="Genomic_DNA"/>
</dbReference>
<dbReference type="EMBL" id="AF200829">
    <property type="protein sequence ID" value="AAF77241.1"/>
    <property type="molecule type" value="Genomic_DNA"/>
</dbReference>
<dbReference type="EMBL" id="AJ400907">
    <property type="protein sequence ID" value="CAB91054.1"/>
    <property type="molecule type" value="Genomic_DNA"/>
</dbReference>
<dbReference type="EMBL" id="FJ190105">
    <property type="protein sequence ID" value="ACI28545.1"/>
    <property type="molecule type" value="Genomic_DNA"/>
</dbReference>
<dbReference type="EMBL" id="FJ190106">
    <property type="protein sequence ID" value="ACI28558.1"/>
    <property type="molecule type" value="Genomic_DNA"/>
</dbReference>
<dbReference type="EMBL" id="FJ190107">
    <property type="protein sequence ID" value="ACI28571.1"/>
    <property type="molecule type" value="Genomic_DNA"/>
</dbReference>
<dbReference type="EMBL" id="FJ190108">
    <property type="protein sequence ID" value="ACI28584.1"/>
    <property type="molecule type" value="Genomic_DNA"/>
</dbReference>
<dbReference type="EMBL" id="FJ190109">
    <property type="protein sequence ID" value="ACI28597.1"/>
    <property type="molecule type" value="Genomic_DNA"/>
</dbReference>
<dbReference type="EMBL" id="FJ190110">
    <property type="protein sequence ID" value="ACI28610.1"/>
    <property type="molecule type" value="Genomic_DNA"/>
</dbReference>
<dbReference type="EMBL" id="EU493757">
    <property type="protein sequence ID" value="ACC94833.1"/>
    <property type="molecule type" value="Genomic_DNA"/>
</dbReference>
<dbReference type="EMBL" id="U37541">
    <property type="protein sequence ID" value="AAC47814.1"/>
    <property type="molecule type" value="Genomic_DNA"/>
</dbReference>
<dbReference type="EMBL" id="KJ947872">
    <property type="protein sequence ID" value="AIC64007.1"/>
    <property type="molecule type" value="Genomic_DNA"/>
</dbReference>
<dbReference type="PIR" id="A01066">
    <property type="entry name" value="PWFF8"/>
</dbReference>
<dbReference type="RefSeq" id="YP_009047269.1">
    <property type="nucleotide sequence ID" value="NC_024511.2"/>
</dbReference>
<dbReference type="SMR" id="P84345"/>
<dbReference type="BioGRID" id="2595067">
    <property type="interactions" value="1"/>
</dbReference>
<dbReference type="ComplexPortal" id="CPX-8618">
    <property type="entry name" value="Mitochondrial proton-transporting ATP synthase complex"/>
</dbReference>
<dbReference type="ComplexPortal" id="CPX-8619">
    <property type="entry name" value="Mitochondrial proton-transporting ATP synthase complex, testis-specific variant"/>
</dbReference>
<dbReference type="FunCoup" id="P84345">
    <property type="interactions" value="144"/>
</dbReference>
<dbReference type="STRING" id="7227.FBpp0100178"/>
<dbReference type="PaxDb" id="7227-FBpp0100178"/>
<dbReference type="EnsemblMetazoa" id="FBtr0100866">
    <property type="protein sequence ID" value="FBpp0100178"/>
    <property type="gene ID" value="FBgn0013673"/>
</dbReference>
<dbReference type="GeneID" id="19893538"/>
<dbReference type="KEGG" id="dme:Dmel_CG34072"/>
<dbReference type="AGR" id="FB:FBgn0013673"/>
<dbReference type="CTD" id="4509"/>
<dbReference type="FlyBase" id="FBgn0013673">
    <property type="gene designation" value="mt:ATPase8"/>
</dbReference>
<dbReference type="VEuPathDB" id="VectorBase:FBgn0013673"/>
<dbReference type="eggNOG" id="ENOG502T7W7">
    <property type="taxonomic scope" value="Eukaryota"/>
</dbReference>
<dbReference type="HOGENOM" id="CLU_3070490_0_0_1"/>
<dbReference type="InParanoid" id="P84345"/>
<dbReference type="OMA" id="MAPISWL"/>
<dbReference type="BioGRID-ORCS" id="19893538">
    <property type="hits" value="0 hits in 1 CRISPR screen"/>
</dbReference>
<dbReference type="GenomeRNAi" id="19893538"/>
<dbReference type="PRO" id="PR:P84345"/>
<dbReference type="Proteomes" id="UP000000803">
    <property type="component" value="Mitochondrion"/>
</dbReference>
<dbReference type="Bgee" id="FBgn0013673">
    <property type="expression patterns" value="Expressed in seminal fluid secreting gland and 41 other cell types or tissues"/>
</dbReference>
<dbReference type="ExpressionAtlas" id="P84345">
    <property type="expression patterns" value="baseline"/>
</dbReference>
<dbReference type="GO" id="GO:0005743">
    <property type="term" value="C:mitochondrial inner membrane"/>
    <property type="evidence" value="ECO:0000305"/>
    <property type="project" value="FlyBase"/>
</dbReference>
<dbReference type="GO" id="GO:0045259">
    <property type="term" value="C:proton-transporting ATP synthase complex"/>
    <property type="evidence" value="ECO:0000250"/>
    <property type="project" value="FlyBase"/>
</dbReference>
<dbReference type="GO" id="GO:0015078">
    <property type="term" value="F:proton transmembrane transporter activity"/>
    <property type="evidence" value="ECO:0007669"/>
    <property type="project" value="InterPro"/>
</dbReference>
<dbReference type="GO" id="GO:0042776">
    <property type="term" value="P:proton motive force-driven mitochondrial ATP synthesis"/>
    <property type="evidence" value="ECO:0000250"/>
    <property type="project" value="FlyBase"/>
</dbReference>
<dbReference type="InterPro" id="IPR001421">
    <property type="entry name" value="ATP8_metazoa"/>
</dbReference>
<dbReference type="Pfam" id="PF00895">
    <property type="entry name" value="ATP-synt_8"/>
    <property type="match status" value="1"/>
</dbReference>